<dbReference type="EC" id="1.2.1.71" evidence="1"/>
<dbReference type="EMBL" id="AE015451">
    <property type="protein sequence ID" value="AAN70053.1"/>
    <property type="molecule type" value="Genomic_DNA"/>
</dbReference>
<dbReference type="RefSeq" id="NP_746589.1">
    <property type="nucleotide sequence ID" value="NC_002947.4"/>
</dbReference>
<dbReference type="RefSeq" id="WP_010955175.1">
    <property type="nucleotide sequence ID" value="NZ_CP169744.1"/>
</dbReference>
<dbReference type="SMR" id="Q88EI4"/>
<dbReference type="STRING" id="160488.PP_4478"/>
<dbReference type="PaxDb" id="160488-PP_4478"/>
<dbReference type="GeneID" id="83678866"/>
<dbReference type="KEGG" id="ppu:PP_4478"/>
<dbReference type="PATRIC" id="fig|160488.4.peg.4764"/>
<dbReference type="eggNOG" id="COG1012">
    <property type="taxonomic scope" value="Bacteria"/>
</dbReference>
<dbReference type="HOGENOM" id="CLU_005391_1_0_6"/>
<dbReference type="OrthoDB" id="9812625at2"/>
<dbReference type="PhylomeDB" id="Q88EI4"/>
<dbReference type="BioCyc" id="PPUT160488:G1G01-4779-MONOMER"/>
<dbReference type="UniPathway" id="UPA00185">
    <property type="reaction ID" value="UER00282"/>
</dbReference>
<dbReference type="Proteomes" id="UP000000556">
    <property type="component" value="Chromosome"/>
</dbReference>
<dbReference type="GO" id="GO:0043824">
    <property type="term" value="F:succinylglutamate-semialdehyde dehydrogenase activity"/>
    <property type="evidence" value="ECO:0007669"/>
    <property type="project" value="UniProtKB-EC"/>
</dbReference>
<dbReference type="GO" id="GO:0019544">
    <property type="term" value="P:arginine catabolic process to glutamate"/>
    <property type="evidence" value="ECO:0007669"/>
    <property type="project" value="UniProtKB-UniRule"/>
</dbReference>
<dbReference type="GO" id="GO:0019545">
    <property type="term" value="P:arginine catabolic process to succinate"/>
    <property type="evidence" value="ECO:0007669"/>
    <property type="project" value="UniProtKB-UniRule"/>
</dbReference>
<dbReference type="CDD" id="cd07095">
    <property type="entry name" value="ALDH_SGSD_AstD"/>
    <property type="match status" value="1"/>
</dbReference>
<dbReference type="FunFam" id="3.40.309.10:FF:000013">
    <property type="entry name" value="N-succinylglutamate 5-semialdehyde dehydrogenase"/>
    <property type="match status" value="1"/>
</dbReference>
<dbReference type="FunFam" id="3.40.605.10:FF:000010">
    <property type="entry name" value="N-succinylglutamate 5-semialdehyde dehydrogenase"/>
    <property type="match status" value="1"/>
</dbReference>
<dbReference type="Gene3D" id="3.40.605.10">
    <property type="entry name" value="Aldehyde Dehydrogenase, Chain A, domain 1"/>
    <property type="match status" value="1"/>
</dbReference>
<dbReference type="Gene3D" id="3.40.309.10">
    <property type="entry name" value="Aldehyde Dehydrogenase, Chain A, domain 2"/>
    <property type="match status" value="1"/>
</dbReference>
<dbReference type="HAMAP" id="MF_01174">
    <property type="entry name" value="Aldedh_AstD"/>
    <property type="match status" value="1"/>
</dbReference>
<dbReference type="InterPro" id="IPR016161">
    <property type="entry name" value="Ald_DH/histidinol_DH"/>
</dbReference>
<dbReference type="InterPro" id="IPR016163">
    <property type="entry name" value="Ald_DH_C"/>
</dbReference>
<dbReference type="InterPro" id="IPR016160">
    <property type="entry name" value="Ald_DH_CS_CYS"/>
</dbReference>
<dbReference type="InterPro" id="IPR029510">
    <property type="entry name" value="Ald_DH_CS_GLU"/>
</dbReference>
<dbReference type="InterPro" id="IPR016162">
    <property type="entry name" value="Ald_DH_N"/>
</dbReference>
<dbReference type="InterPro" id="IPR015590">
    <property type="entry name" value="Aldehyde_DH_dom"/>
</dbReference>
<dbReference type="InterPro" id="IPR017649">
    <property type="entry name" value="SuccinylGlu_semiald_DH_AstD"/>
</dbReference>
<dbReference type="NCBIfam" id="TIGR03240">
    <property type="entry name" value="arg_catab_astD"/>
    <property type="match status" value="1"/>
</dbReference>
<dbReference type="NCBIfam" id="NF006992">
    <property type="entry name" value="PRK09457.1"/>
    <property type="match status" value="1"/>
</dbReference>
<dbReference type="PANTHER" id="PTHR11699">
    <property type="entry name" value="ALDEHYDE DEHYDROGENASE-RELATED"/>
    <property type="match status" value="1"/>
</dbReference>
<dbReference type="Pfam" id="PF00171">
    <property type="entry name" value="Aldedh"/>
    <property type="match status" value="1"/>
</dbReference>
<dbReference type="SUPFAM" id="SSF53720">
    <property type="entry name" value="ALDH-like"/>
    <property type="match status" value="1"/>
</dbReference>
<dbReference type="PROSITE" id="PS00070">
    <property type="entry name" value="ALDEHYDE_DEHYDR_CYS"/>
    <property type="match status" value="1"/>
</dbReference>
<dbReference type="PROSITE" id="PS00687">
    <property type="entry name" value="ALDEHYDE_DEHYDR_GLU"/>
    <property type="match status" value="1"/>
</dbReference>
<comment type="function">
    <text evidence="1">Catalyzes the NAD-dependent reduction of succinylglutamate semialdehyde into succinylglutamate.</text>
</comment>
<comment type="catalytic activity">
    <reaction evidence="1">
        <text>N-succinyl-L-glutamate 5-semialdehyde + NAD(+) + H2O = N-succinyl-L-glutamate + NADH + 2 H(+)</text>
        <dbReference type="Rhea" id="RHEA:10812"/>
        <dbReference type="ChEBI" id="CHEBI:15377"/>
        <dbReference type="ChEBI" id="CHEBI:15378"/>
        <dbReference type="ChEBI" id="CHEBI:57540"/>
        <dbReference type="ChEBI" id="CHEBI:57945"/>
        <dbReference type="ChEBI" id="CHEBI:58520"/>
        <dbReference type="ChEBI" id="CHEBI:58763"/>
        <dbReference type="EC" id="1.2.1.71"/>
    </reaction>
</comment>
<comment type="pathway">
    <text evidence="1">Amino-acid degradation; L-arginine degradation via AST pathway; L-glutamate and succinate from L-arginine: step 4/5.</text>
</comment>
<comment type="similarity">
    <text evidence="1">Belongs to the aldehyde dehydrogenase family. AstD subfamily.</text>
</comment>
<feature type="chain" id="PRO_0000262416" description="N-succinylglutamate 5-semialdehyde dehydrogenase">
    <location>
        <begin position="1"/>
        <end position="487"/>
    </location>
</feature>
<feature type="active site" evidence="1">
    <location>
        <position position="244"/>
    </location>
</feature>
<feature type="active site" evidence="1">
    <location>
        <position position="278"/>
    </location>
</feature>
<feature type="binding site" evidence="1">
    <location>
        <begin position="221"/>
        <end position="226"/>
    </location>
    <ligand>
        <name>NAD(+)</name>
        <dbReference type="ChEBI" id="CHEBI:57540"/>
    </ligand>
</feature>
<accession>Q88EI4</accession>
<name>ASTD_PSEPK</name>
<gene>
    <name evidence="1" type="primary">astD</name>
    <name type="ordered locus">PP_4478</name>
</gene>
<keyword id="KW-0056">Arginine metabolism</keyword>
<keyword id="KW-0520">NAD</keyword>
<keyword id="KW-0560">Oxidoreductase</keyword>
<keyword id="KW-1185">Reference proteome</keyword>
<proteinExistence type="inferred from homology"/>
<sequence length="487" mass="51330">MTTHYIAGNWQAGQGETLQSLNPVTQAVIWQGQGADASQVDAAVQAARQAFPAWAQLSLEARIDVLEKFAAQLKVHAEAMAQCIGEETGKPLWESATEVTSMINKVAISVQSYRERTGEKSGPLADATAVLRHKPHGVVAVFGPYNFPGHLPNGHIVPALLAGNCVVFKPSELTPKVAELTVNCWIAAGLPAGVLNLVQGARETGVALAANPGIDGLFFTGSSRTGNLLHQQFAGRPDKILALEMGGNNPLVVDEVKDLDAAVYTIIQSAFISAGQRCTCARRLLVPQGAWGDALIARLVEVCKTITVGAFDEQPAPFMGSVISLQAARALLAAQVELAAKGGVKLLEMTQPQADAALLTPGIVDVTAVADRPDEEFFGPLLQVIRYADFDAAIDEANNTQYGLAAGLLSDSRARYQYFWLRSRAGIVNWNKQLTGAASSAPFGGVGASGNHRASAYYAADYCAYPVASLETASLALPATLTPGVTL</sequence>
<protein>
    <recommendedName>
        <fullName evidence="1">N-succinylglutamate 5-semialdehyde dehydrogenase</fullName>
        <ecNumber evidence="1">1.2.1.71</ecNumber>
    </recommendedName>
    <alternativeName>
        <fullName evidence="1">Succinylglutamic semialdehyde dehydrogenase</fullName>
        <shortName evidence="1">SGSD</shortName>
    </alternativeName>
</protein>
<evidence type="ECO:0000255" key="1">
    <source>
        <dbReference type="HAMAP-Rule" id="MF_01174"/>
    </source>
</evidence>
<reference key="1">
    <citation type="journal article" date="2002" name="Environ. Microbiol.">
        <title>Complete genome sequence and comparative analysis of the metabolically versatile Pseudomonas putida KT2440.</title>
        <authorList>
            <person name="Nelson K.E."/>
            <person name="Weinel C."/>
            <person name="Paulsen I.T."/>
            <person name="Dodson R.J."/>
            <person name="Hilbert H."/>
            <person name="Martins dos Santos V.A.P."/>
            <person name="Fouts D.E."/>
            <person name="Gill S.R."/>
            <person name="Pop M."/>
            <person name="Holmes M."/>
            <person name="Brinkac L.M."/>
            <person name="Beanan M.J."/>
            <person name="DeBoy R.T."/>
            <person name="Daugherty S.C."/>
            <person name="Kolonay J.F."/>
            <person name="Madupu R."/>
            <person name="Nelson W.C."/>
            <person name="White O."/>
            <person name="Peterson J.D."/>
            <person name="Khouri H.M."/>
            <person name="Hance I."/>
            <person name="Chris Lee P."/>
            <person name="Holtzapple E.K."/>
            <person name="Scanlan D."/>
            <person name="Tran K."/>
            <person name="Moazzez A."/>
            <person name="Utterback T.R."/>
            <person name="Rizzo M."/>
            <person name="Lee K."/>
            <person name="Kosack D."/>
            <person name="Moestl D."/>
            <person name="Wedler H."/>
            <person name="Lauber J."/>
            <person name="Stjepandic D."/>
            <person name="Hoheisel J."/>
            <person name="Straetz M."/>
            <person name="Heim S."/>
            <person name="Kiewitz C."/>
            <person name="Eisen J.A."/>
            <person name="Timmis K.N."/>
            <person name="Duesterhoeft A."/>
            <person name="Tuemmler B."/>
            <person name="Fraser C.M."/>
        </authorList>
    </citation>
    <scope>NUCLEOTIDE SEQUENCE [LARGE SCALE GENOMIC DNA]</scope>
    <source>
        <strain>ATCC 47054 / DSM 6125 / CFBP 8728 / NCIMB 11950 / KT2440</strain>
    </source>
</reference>
<organism>
    <name type="scientific">Pseudomonas putida (strain ATCC 47054 / DSM 6125 / CFBP 8728 / NCIMB 11950 / KT2440)</name>
    <dbReference type="NCBI Taxonomy" id="160488"/>
    <lineage>
        <taxon>Bacteria</taxon>
        <taxon>Pseudomonadati</taxon>
        <taxon>Pseudomonadota</taxon>
        <taxon>Gammaproteobacteria</taxon>
        <taxon>Pseudomonadales</taxon>
        <taxon>Pseudomonadaceae</taxon>
        <taxon>Pseudomonas</taxon>
    </lineage>
</organism>